<sequence length="417" mass="44743">MLEQMGKAAKAASYQLAVLSTAQKDRALLTIADLLEAESATILAANALDLADARQNGMSEALQDRLLLTQERLSAIASDVRQVCRLTDPVGQVIDGSMLDNGLKLERRRVPLGVVGVIYEARPNVTIDVASLCLKTGNAVILRGGKETYRTNAATVKVIQQALSQCGLPAAAVQAIESPDRELVNQLLKLDRYVDMLIPRGGAGLHKLCREQSTIPVITGGIGVCHIYADDSIDFDKALTVIESAKVQRPSACNSLETLLVNQRIADRFLPELSKKMAAAGVTLHASPSAMPYLTGGPASVVAVEEANYNDEWLSNDLNVTLVDDLDAAVAHIREHGTQHSDAILTRSLTNAERFVREVDSSAVYVNASTRFTDGGQFGLGAEVAVSTQKLHARGPMGLEALTTYKWIGYGDDLIRA</sequence>
<feature type="chain" id="PRO_1000206001" description="Gamma-glutamyl phosphate reductase">
    <location>
        <begin position="1"/>
        <end position="417"/>
    </location>
</feature>
<organism>
    <name type="scientific">Pectobacterium carotovorum subsp. carotovorum (strain PC1)</name>
    <dbReference type="NCBI Taxonomy" id="561230"/>
    <lineage>
        <taxon>Bacteria</taxon>
        <taxon>Pseudomonadati</taxon>
        <taxon>Pseudomonadota</taxon>
        <taxon>Gammaproteobacteria</taxon>
        <taxon>Enterobacterales</taxon>
        <taxon>Pectobacteriaceae</taxon>
        <taxon>Pectobacterium</taxon>
    </lineage>
</organism>
<gene>
    <name evidence="1" type="primary">proA</name>
    <name type="ordered locus">PC1_3283</name>
</gene>
<keyword id="KW-0028">Amino-acid biosynthesis</keyword>
<keyword id="KW-0963">Cytoplasm</keyword>
<keyword id="KW-0521">NADP</keyword>
<keyword id="KW-0560">Oxidoreductase</keyword>
<keyword id="KW-0641">Proline biosynthesis</keyword>
<accession>C6DCX4</accession>
<reference key="1">
    <citation type="submission" date="2009-07" db="EMBL/GenBank/DDBJ databases">
        <title>Complete sequence of Pectobacterium carotovorum subsp. carotovorum PC1.</title>
        <authorList>
            <consortium name="US DOE Joint Genome Institute"/>
            <person name="Lucas S."/>
            <person name="Copeland A."/>
            <person name="Lapidus A."/>
            <person name="Glavina del Rio T."/>
            <person name="Tice H."/>
            <person name="Bruce D."/>
            <person name="Goodwin L."/>
            <person name="Pitluck S."/>
            <person name="Munk A.C."/>
            <person name="Brettin T."/>
            <person name="Detter J.C."/>
            <person name="Han C."/>
            <person name="Tapia R."/>
            <person name="Larimer F."/>
            <person name="Land M."/>
            <person name="Hauser L."/>
            <person name="Kyrpides N."/>
            <person name="Mikhailova N."/>
            <person name="Balakrishnan V."/>
            <person name="Glasner J."/>
            <person name="Perna N.T."/>
        </authorList>
    </citation>
    <scope>NUCLEOTIDE SEQUENCE [LARGE SCALE GENOMIC DNA]</scope>
    <source>
        <strain>PC1</strain>
    </source>
</reference>
<proteinExistence type="inferred from homology"/>
<comment type="function">
    <text evidence="1">Catalyzes the NADPH-dependent reduction of L-glutamate 5-phosphate into L-glutamate 5-semialdehyde and phosphate. The product spontaneously undergoes cyclization to form 1-pyrroline-5-carboxylate.</text>
</comment>
<comment type="catalytic activity">
    <reaction evidence="1">
        <text>L-glutamate 5-semialdehyde + phosphate + NADP(+) = L-glutamyl 5-phosphate + NADPH + H(+)</text>
        <dbReference type="Rhea" id="RHEA:19541"/>
        <dbReference type="ChEBI" id="CHEBI:15378"/>
        <dbReference type="ChEBI" id="CHEBI:43474"/>
        <dbReference type="ChEBI" id="CHEBI:57783"/>
        <dbReference type="ChEBI" id="CHEBI:58066"/>
        <dbReference type="ChEBI" id="CHEBI:58274"/>
        <dbReference type="ChEBI" id="CHEBI:58349"/>
        <dbReference type="EC" id="1.2.1.41"/>
    </reaction>
</comment>
<comment type="pathway">
    <text evidence="1">Amino-acid biosynthesis; L-proline biosynthesis; L-glutamate 5-semialdehyde from L-glutamate: step 2/2.</text>
</comment>
<comment type="subcellular location">
    <subcellularLocation>
        <location evidence="1">Cytoplasm</location>
    </subcellularLocation>
</comment>
<comment type="similarity">
    <text evidence="1">Belongs to the gamma-glutamyl phosphate reductase family.</text>
</comment>
<evidence type="ECO:0000255" key="1">
    <source>
        <dbReference type="HAMAP-Rule" id="MF_00412"/>
    </source>
</evidence>
<dbReference type="EC" id="1.2.1.41" evidence="1"/>
<dbReference type="EMBL" id="CP001657">
    <property type="protein sequence ID" value="ACT14299.1"/>
    <property type="molecule type" value="Genomic_DNA"/>
</dbReference>
<dbReference type="RefSeq" id="WP_015841434.1">
    <property type="nucleotide sequence ID" value="NC_012917.1"/>
</dbReference>
<dbReference type="SMR" id="C6DCX4"/>
<dbReference type="STRING" id="561230.PC1_3283"/>
<dbReference type="KEGG" id="pct:PC1_3283"/>
<dbReference type="eggNOG" id="COG0014">
    <property type="taxonomic scope" value="Bacteria"/>
</dbReference>
<dbReference type="HOGENOM" id="CLU_030231_0_0_6"/>
<dbReference type="OrthoDB" id="9809970at2"/>
<dbReference type="UniPathway" id="UPA00098">
    <property type="reaction ID" value="UER00360"/>
</dbReference>
<dbReference type="Proteomes" id="UP000002736">
    <property type="component" value="Chromosome"/>
</dbReference>
<dbReference type="GO" id="GO:0005737">
    <property type="term" value="C:cytoplasm"/>
    <property type="evidence" value="ECO:0007669"/>
    <property type="project" value="UniProtKB-SubCell"/>
</dbReference>
<dbReference type="GO" id="GO:0004350">
    <property type="term" value="F:glutamate-5-semialdehyde dehydrogenase activity"/>
    <property type="evidence" value="ECO:0007669"/>
    <property type="project" value="UniProtKB-UniRule"/>
</dbReference>
<dbReference type="GO" id="GO:0050661">
    <property type="term" value="F:NADP binding"/>
    <property type="evidence" value="ECO:0007669"/>
    <property type="project" value="InterPro"/>
</dbReference>
<dbReference type="GO" id="GO:0055129">
    <property type="term" value="P:L-proline biosynthetic process"/>
    <property type="evidence" value="ECO:0007669"/>
    <property type="project" value="UniProtKB-UniRule"/>
</dbReference>
<dbReference type="CDD" id="cd07079">
    <property type="entry name" value="ALDH_F18-19_ProA-GPR"/>
    <property type="match status" value="1"/>
</dbReference>
<dbReference type="FunFam" id="3.40.309.10:FF:000006">
    <property type="entry name" value="Gamma-glutamyl phosphate reductase"/>
    <property type="match status" value="1"/>
</dbReference>
<dbReference type="Gene3D" id="3.40.605.10">
    <property type="entry name" value="Aldehyde Dehydrogenase, Chain A, domain 1"/>
    <property type="match status" value="1"/>
</dbReference>
<dbReference type="Gene3D" id="3.40.309.10">
    <property type="entry name" value="Aldehyde Dehydrogenase, Chain A, domain 2"/>
    <property type="match status" value="1"/>
</dbReference>
<dbReference type="HAMAP" id="MF_00412">
    <property type="entry name" value="ProA"/>
    <property type="match status" value="1"/>
</dbReference>
<dbReference type="InterPro" id="IPR016161">
    <property type="entry name" value="Ald_DH/histidinol_DH"/>
</dbReference>
<dbReference type="InterPro" id="IPR016163">
    <property type="entry name" value="Ald_DH_C"/>
</dbReference>
<dbReference type="InterPro" id="IPR016162">
    <property type="entry name" value="Ald_DH_N"/>
</dbReference>
<dbReference type="InterPro" id="IPR015590">
    <property type="entry name" value="Aldehyde_DH_dom"/>
</dbReference>
<dbReference type="InterPro" id="IPR020593">
    <property type="entry name" value="G-glutamylP_reductase_CS"/>
</dbReference>
<dbReference type="InterPro" id="IPR012134">
    <property type="entry name" value="Glu-5-SA_DH"/>
</dbReference>
<dbReference type="InterPro" id="IPR000965">
    <property type="entry name" value="GPR_dom"/>
</dbReference>
<dbReference type="NCBIfam" id="NF001221">
    <property type="entry name" value="PRK00197.1"/>
    <property type="match status" value="1"/>
</dbReference>
<dbReference type="NCBIfam" id="TIGR00407">
    <property type="entry name" value="proA"/>
    <property type="match status" value="1"/>
</dbReference>
<dbReference type="PANTHER" id="PTHR11063:SF8">
    <property type="entry name" value="DELTA-1-PYRROLINE-5-CARBOXYLATE SYNTHASE"/>
    <property type="match status" value="1"/>
</dbReference>
<dbReference type="PANTHER" id="PTHR11063">
    <property type="entry name" value="GLUTAMATE SEMIALDEHYDE DEHYDROGENASE"/>
    <property type="match status" value="1"/>
</dbReference>
<dbReference type="Pfam" id="PF00171">
    <property type="entry name" value="Aldedh"/>
    <property type="match status" value="1"/>
</dbReference>
<dbReference type="PIRSF" id="PIRSF000151">
    <property type="entry name" value="GPR"/>
    <property type="match status" value="1"/>
</dbReference>
<dbReference type="SUPFAM" id="SSF53720">
    <property type="entry name" value="ALDH-like"/>
    <property type="match status" value="1"/>
</dbReference>
<dbReference type="PROSITE" id="PS01223">
    <property type="entry name" value="PROA"/>
    <property type="match status" value="1"/>
</dbReference>
<protein>
    <recommendedName>
        <fullName evidence="1">Gamma-glutamyl phosphate reductase</fullName>
        <shortName evidence="1">GPR</shortName>
        <ecNumber evidence="1">1.2.1.41</ecNumber>
    </recommendedName>
    <alternativeName>
        <fullName evidence="1">Glutamate-5-semialdehyde dehydrogenase</fullName>
    </alternativeName>
    <alternativeName>
        <fullName evidence="1">Glutamyl-gamma-semialdehyde dehydrogenase</fullName>
        <shortName evidence="1">GSA dehydrogenase</shortName>
    </alternativeName>
</protein>
<name>PROA_PECCP</name>